<accession>A0A0A8JBQ8</accession>
<reference key="1">
    <citation type="journal article" date="2014" name="Antimicrob. Agents Chemother.">
        <title>Identification of capsular types in carbapenem-resistant Klebsiella pneumoniae strains by wzc sequencing and implications in capsule depolymerase treatment.</title>
        <authorList>
            <person name="Pan Y.-J."/>
            <person name="Lin T.-L."/>
            <person name="Lin Y.-T."/>
            <person name="Su P.-A."/>
            <person name="Chen C.-T."/>
            <person name="Hsieh P.-F."/>
            <person name="Hsu C.-R."/>
            <person name="Chen C.-C."/>
            <person name="Hsieh Y.-C."/>
            <person name="Wang J.-T."/>
        </authorList>
    </citation>
    <scope>NUCLEOTIDE SEQUENCE [LARGE SCALE GENOMIC DNA]</scope>
</reference>
<reference key="2">
    <citation type="journal article" date="2017" name="J. Virol.">
        <title>Klebsiella Phage PhiK64-1 Encodes Multiple Depolymerases for Multiple Host Capsular Types.</title>
        <authorList>
            <person name="Pan Y.-J."/>
            <person name="Lin T.-L."/>
            <person name="Chen C.-C."/>
            <person name="Tsai Y.-T."/>
            <person name="Cheng Y.-H."/>
            <person name="Chen Y.-Y."/>
            <person name="Hsieh P.-F."/>
            <person name="Lin Y.-T."/>
            <person name="Wang J.-T."/>
        </authorList>
    </citation>
    <scope>NUCLEOTIDE SEQUENCE [GENOMIC DNA]</scope>
    <scope>FUNCTION</scope>
</reference>
<reference key="3">
    <citation type="journal article" date="2019" name="Front. Microbiol.">
        <title>Modeling the Architecture of Depolymerase-Containing Receptor Binding Proteins in Klebsiella Phages.</title>
        <authorList>
            <person name="Latka A."/>
            <person name="Leiman P.G."/>
            <person name="Drulis-Kawa Z."/>
            <person name="Briers Y."/>
        </authorList>
    </citation>
    <scope>REVIEW</scope>
</reference>
<protein>
    <recommendedName>
        <fullName>Depolymerase, capsule K11-specific</fullName>
    </recommendedName>
    <alternativeName>
        <fullName evidence="2">Probable tail fiber protein</fullName>
    </alternativeName>
</protein>
<organism>
    <name type="scientific">Klebsiella phage K64-1</name>
    <name type="common">Bacteriophage K64-1</name>
    <dbReference type="NCBI Taxonomy" id="1439894"/>
    <lineage>
        <taxon>Viruses</taxon>
        <taxon>Duplodnaviria</taxon>
        <taxon>Heunggongvirae</taxon>
        <taxon>Uroviricota</taxon>
        <taxon>Caudoviricetes</taxon>
        <taxon>Alcyoneusvirus</taxon>
        <taxon>Alcyoneusvirus K641</taxon>
    </lineage>
</organism>
<sequence>MANKLTQPKGSISKETNKEAIARLFGIKKTAVGYISTSVLIDPYTILYDESTETCWYRGTATGTPISWIITNGSLTLQTTSGQFALIKTQVDINLRQEITGEVGYSNIGKVSSVTSLRSIEPTTNGQQIILNQINSTLGTTTGGIFCYDSSDVTSIDDGYTVIVTATGKRWKRPENYIDMAWFGALNPAVDFSDAWDAAVAIVSNYVSNVGFYGRKAIYLKAGTYKPSRQLDIPSYVSVVAIGNVTIDGSGMPDNSYVIRIINKVSGISTTYHKGWNLGSIGGTFRVLGNTLDGNVDGIFVGNTSNMSDVRNVILYGVSIGGVRYGLTFGSINTYLFTATDCHIESTIIGIYVPNTTSSNSGERMTFNDCTIGGSRTNHIQISQPGFDVNFTNCSFDFTSGNVFYGTSTWGYSKVSFTSCHMEGYNGLLLSAESPQSSSVGSNRSIIMNNITNLSRLRSNTTGTNSSSRLHIDAKSTPVYINGLDQRHEVTPYLEDCLMCSDETILYINGYIKDPYFQLPSNTMILNKGYNMGDEVVGTVVNSTATLDALTRYTCVDRNAMSATVITGGTAGTQLQVTGAGGYFNLATKSFIPVTVKNRLGLYLSLSALDSTGNIQCTFSVAWYDVNDNLISTSSASSINMRTVFNDTTLPNYSDGNSRYIATPSRTFNAPVGAVKCKPRWQVSGFTGNINVSRMVSFILAG</sequence>
<proteinExistence type="predicted"/>
<dbReference type="EMBL" id="AB897757">
    <property type="protein sequence ID" value="BAQ02837.1"/>
    <property type="molecule type" value="Genomic_DNA"/>
</dbReference>
<dbReference type="EMBL" id="LC121100">
    <property type="protein sequence ID" value="BAW85694.1"/>
    <property type="molecule type" value="Genomic_DNA"/>
</dbReference>
<dbReference type="RefSeq" id="YP_009153197.1">
    <property type="nucleotide sequence ID" value="NC_027399.1"/>
</dbReference>
<dbReference type="SMR" id="A0A0A8JBQ8"/>
<dbReference type="OrthoDB" id="8468at10239"/>
<dbReference type="Proteomes" id="UP000202478">
    <property type="component" value="Genome"/>
</dbReference>
<dbReference type="GO" id="GO:0098015">
    <property type="term" value="C:virus tail"/>
    <property type="evidence" value="ECO:0007669"/>
    <property type="project" value="UniProtKB-KW"/>
</dbReference>
<dbReference type="GO" id="GO:0098671">
    <property type="term" value="P:adhesion receptor-mediated virion attachment to host cell"/>
    <property type="evidence" value="ECO:0007669"/>
    <property type="project" value="UniProtKB-KW"/>
</dbReference>
<dbReference type="GO" id="GO:0098994">
    <property type="term" value="P:symbiont entry into host cell via disruption of host cell envelope"/>
    <property type="evidence" value="ECO:0007669"/>
    <property type="project" value="UniProtKB-KW"/>
</dbReference>
<dbReference type="GO" id="GO:0098996">
    <property type="term" value="P:symbiont entry into host cell via disruption of host cell glycocalyx"/>
    <property type="evidence" value="ECO:0000314"/>
    <property type="project" value="UniProtKB"/>
</dbReference>
<dbReference type="Gene3D" id="3.30.2020.50">
    <property type="match status" value="1"/>
</dbReference>
<dbReference type="InterPro" id="IPR011050">
    <property type="entry name" value="Pectin_lyase_fold/virulence"/>
</dbReference>
<dbReference type="SUPFAM" id="SSF51126">
    <property type="entry name" value="Pectin lyase-like"/>
    <property type="match status" value="1"/>
</dbReference>
<gene>
    <name evidence="4" type="primary">S1-1</name>
</gene>
<feature type="chain" id="PRO_0000458689" description="Depolymerase, capsule K11-specific">
    <location>
        <begin position="1"/>
        <end position="702"/>
    </location>
</feature>
<comment type="function">
    <text evidence="1 3">Functions as a receptor binding protein (RBP) and probably mediates the attachment to the host capsular exopolysaccharides (Probable). Displays a depolymerase activity that specifically degrades the K11-type polysaccharides of Klebsiella pneumoniae capsule (PubMed:28077636).</text>
</comment>
<comment type="subcellular location">
    <subcellularLocation>
        <location evidence="2">Virion</location>
    </subcellularLocation>
    <text evidence="2">Tail appendage.</text>
</comment>
<name>DPO11_BPK64</name>
<evidence type="ECO:0000269" key="1">
    <source>
    </source>
</evidence>
<evidence type="ECO:0000305" key="2"/>
<evidence type="ECO:0000305" key="3">
    <source>
    </source>
</evidence>
<evidence type="ECO:0000312" key="4">
    <source>
        <dbReference type="EMBL" id="BAW85694.1"/>
    </source>
</evidence>
<organismHost>
    <name type="scientific">Klebsiella</name>
    <dbReference type="NCBI Taxonomy" id="570"/>
</organismHost>
<keyword id="KW-1238">Degradation of host capsule during virus entry</keyword>
<keyword id="KW-1235">Degradation of host cell envelope components during virus entry</keyword>
<keyword id="KW-0945">Host-virus interaction</keyword>
<keyword id="KW-1185">Reference proteome</keyword>
<keyword id="KW-1233">Viral attachment to host adhesion receptor</keyword>
<keyword id="KW-1161">Viral attachment to host cell</keyword>
<keyword id="KW-1227">Viral tail protein</keyword>
<keyword id="KW-0946">Virion</keyword>
<keyword id="KW-1160">Virus entry into host cell</keyword>